<comment type="catalytic activity">
    <reaction evidence="1">
        <text>D-mannitol 1-phosphate + NAD(+) = beta-D-fructose 6-phosphate + NADH + H(+)</text>
        <dbReference type="Rhea" id="RHEA:19661"/>
        <dbReference type="ChEBI" id="CHEBI:15378"/>
        <dbReference type="ChEBI" id="CHEBI:57540"/>
        <dbReference type="ChEBI" id="CHEBI:57634"/>
        <dbReference type="ChEBI" id="CHEBI:57945"/>
        <dbReference type="ChEBI" id="CHEBI:61381"/>
        <dbReference type="EC" id="1.1.1.17"/>
    </reaction>
</comment>
<comment type="similarity">
    <text evidence="1">Belongs to the mannitol dehydrogenase family.</text>
</comment>
<organism>
    <name type="scientific">Pseudarthrobacter chlorophenolicus (strain ATCC 700700 / DSM 12829 / CIP 107037 / JCM 12360 / KCTC 9906 / NCIMB 13794 / A6)</name>
    <name type="common">Arthrobacter chlorophenolicus</name>
    <dbReference type="NCBI Taxonomy" id="452863"/>
    <lineage>
        <taxon>Bacteria</taxon>
        <taxon>Bacillati</taxon>
        <taxon>Actinomycetota</taxon>
        <taxon>Actinomycetes</taxon>
        <taxon>Micrococcales</taxon>
        <taxon>Micrococcaceae</taxon>
        <taxon>Pseudarthrobacter</taxon>
    </lineage>
</organism>
<proteinExistence type="inferred from homology"/>
<gene>
    <name evidence="1" type="primary">mtlD</name>
    <name type="ordered locus">Achl_3788</name>
</gene>
<reference key="1">
    <citation type="submission" date="2009-01" db="EMBL/GenBank/DDBJ databases">
        <title>Complete sequence of chromosome of Arthrobacter chlorophenolicus A6.</title>
        <authorList>
            <consortium name="US DOE Joint Genome Institute"/>
            <person name="Lucas S."/>
            <person name="Copeland A."/>
            <person name="Lapidus A."/>
            <person name="Glavina del Rio T."/>
            <person name="Tice H."/>
            <person name="Bruce D."/>
            <person name="Goodwin L."/>
            <person name="Pitluck S."/>
            <person name="Goltsman E."/>
            <person name="Clum A."/>
            <person name="Larimer F."/>
            <person name="Land M."/>
            <person name="Hauser L."/>
            <person name="Kyrpides N."/>
            <person name="Mikhailova N."/>
            <person name="Jansson J."/>
            <person name="Richardson P."/>
        </authorList>
    </citation>
    <scope>NUCLEOTIDE SEQUENCE [LARGE SCALE GENOMIC DNA]</scope>
    <source>
        <strain>ATCC 700700 / DSM 12829 / CIP 107037 / JCM 12360 / KCTC 9906 / NCIMB 13794 / A6</strain>
    </source>
</reference>
<feature type="chain" id="PRO_1000124383" description="Mannitol-1-phosphate 5-dehydrogenase">
    <location>
        <begin position="1"/>
        <end position="387"/>
    </location>
</feature>
<feature type="binding site" evidence="1">
    <location>
        <begin position="3"/>
        <end position="14"/>
    </location>
    <ligand>
        <name>NAD(+)</name>
        <dbReference type="ChEBI" id="CHEBI:57540"/>
    </ligand>
</feature>
<keyword id="KW-0520">NAD</keyword>
<keyword id="KW-0560">Oxidoreductase</keyword>
<protein>
    <recommendedName>
        <fullName evidence="1">Mannitol-1-phosphate 5-dehydrogenase</fullName>
        <ecNumber evidence="1">1.1.1.17</ecNumber>
    </recommendedName>
</protein>
<sequence>MKAVHFGAGNIGRGFVGLLLHNAGYEVVFADVAEGLIAQLADADSYAVHEVGESPAVQTVDNFRALNSNTQEAELITEIATADIVTTAVGPHILKFVAPVIARGIAARGAGMAPLQVMACENAINATDVLAREVASRPEAAGGALDGQAVFANTAVDRIVPNQEAGQGLDVTVESFYEWVIDRTAFAGSEPEIPGATFVDELAPYIERKLFTVNTGHASAAYFGFEAGLEKISDAMADQDVAEDVRAVLEETKQLLVAKHGFSNEAQEAYVQKILVRFTNPHLPDTVNRVGRAPLRKLSRHERFIGPAAELAERGVVPEALLGAISAALRFTDPADAEATELAGILASGSAADATARITGLDPDHPLFNAVSTLVEERQAELAATSA</sequence>
<dbReference type="EC" id="1.1.1.17" evidence="1"/>
<dbReference type="EMBL" id="CP001341">
    <property type="protein sequence ID" value="ACL41742.1"/>
    <property type="molecule type" value="Genomic_DNA"/>
</dbReference>
<dbReference type="RefSeq" id="WP_015938935.1">
    <property type="nucleotide sequence ID" value="NC_011886.1"/>
</dbReference>
<dbReference type="SMR" id="B8H7T9"/>
<dbReference type="STRING" id="452863.Achl_3788"/>
<dbReference type="KEGG" id="ach:Achl_3788"/>
<dbReference type="eggNOG" id="COG0246">
    <property type="taxonomic scope" value="Bacteria"/>
</dbReference>
<dbReference type="HOGENOM" id="CLU_036089_0_1_11"/>
<dbReference type="OrthoDB" id="271711at2"/>
<dbReference type="Proteomes" id="UP000002505">
    <property type="component" value="Chromosome"/>
</dbReference>
<dbReference type="GO" id="GO:0005829">
    <property type="term" value="C:cytosol"/>
    <property type="evidence" value="ECO:0007669"/>
    <property type="project" value="TreeGrafter"/>
</dbReference>
<dbReference type="GO" id="GO:0008926">
    <property type="term" value="F:mannitol-1-phosphate 5-dehydrogenase activity"/>
    <property type="evidence" value="ECO:0007669"/>
    <property type="project" value="UniProtKB-UniRule"/>
</dbReference>
<dbReference type="GO" id="GO:0019592">
    <property type="term" value="P:mannitol catabolic process"/>
    <property type="evidence" value="ECO:0007669"/>
    <property type="project" value="TreeGrafter"/>
</dbReference>
<dbReference type="Gene3D" id="1.10.1040.10">
    <property type="entry name" value="N-(1-d-carboxylethyl)-l-norvaline Dehydrogenase, domain 2"/>
    <property type="match status" value="1"/>
</dbReference>
<dbReference type="Gene3D" id="3.40.50.720">
    <property type="entry name" value="NAD(P)-binding Rossmann-like Domain"/>
    <property type="match status" value="1"/>
</dbReference>
<dbReference type="HAMAP" id="MF_00196">
    <property type="entry name" value="Mannitol_dehydrog"/>
    <property type="match status" value="1"/>
</dbReference>
<dbReference type="InterPro" id="IPR008927">
    <property type="entry name" value="6-PGluconate_DH-like_C_sf"/>
</dbReference>
<dbReference type="InterPro" id="IPR013328">
    <property type="entry name" value="6PGD_dom2"/>
</dbReference>
<dbReference type="InterPro" id="IPR023028">
    <property type="entry name" value="Mannitol_1_phos_5_DH"/>
</dbReference>
<dbReference type="InterPro" id="IPR000669">
    <property type="entry name" value="Mannitol_DH"/>
</dbReference>
<dbReference type="InterPro" id="IPR013118">
    <property type="entry name" value="Mannitol_DH_C"/>
</dbReference>
<dbReference type="InterPro" id="IPR013131">
    <property type="entry name" value="Mannitol_DH_N"/>
</dbReference>
<dbReference type="InterPro" id="IPR036291">
    <property type="entry name" value="NAD(P)-bd_dom_sf"/>
</dbReference>
<dbReference type="NCBIfam" id="NF002646">
    <property type="entry name" value="PRK02318.1-2"/>
    <property type="match status" value="1"/>
</dbReference>
<dbReference type="NCBIfam" id="NF002652">
    <property type="entry name" value="PRK02318.2-5"/>
    <property type="match status" value="1"/>
</dbReference>
<dbReference type="PANTHER" id="PTHR30524:SF0">
    <property type="entry name" value="ALTRONATE OXIDOREDUCTASE-RELATED"/>
    <property type="match status" value="1"/>
</dbReference>
<dbReference type="PANTHER" id="PTHR30524">
    <property type="entry name" value="MANNITOL-1-PHOSPHATE 5-DEHYDROGENASE"/>
    <property type="match status" value="1"/>
</dbReference>
<dbReference type="Pfam" id="PF01232">
    <property type="entry name" value="Mannitol_dh"/>
    <property type="match status" value="1"/>
</dbReference>
<dbReference type="Pfam" id="PF08125">
    <property type="entry name" value="Mannitol_dh_C"/>
    <property type="match status" value="1"/>
</dbReference>
<dbReference type="PRINTS" id="PR00084">
    <property type="entry name" value="MTLDHDRGNASE"/>
</dbReference>
<dbReference type="SUPFAM" id="SSF48179">
    <property type="entry name" value="6-phosphogluconate dehydrogenase C-terminal domain-like"/>
    <property type="match status" value="1"/>
</dbReference>
<dbReference type="SUPFAM" id="SSF51735">
    <property type="entry name" value="NAD(P)-binding Rossmann-fold domains"/>
    <property type="match status" value="1"/>
</dbReference>
<accession>B8H7T9</accession>
<name>MTLD_PSECP</name>
<evidence type="ECO:0000255" key="1">
    <source>
        <dbReference type="HAMAP-Rule" id="MF_00196"/>
    </source>
</evidence>